<accession>Q00273</accession>
<sequence>MEDINLTIFSDDALPHAVVVDDYVIAIKRNPNGTFLEPHQMYDRYTQEFLQGKARDVLRQNGRDGYKLIIPEALSTGIIRYENKTKGAQSEVELENQLRSSIRHQRVKPRMDEAHRKLQIELRGGQILLHPRIAESIEFSIISKENATCSHTPVNCAYEVLLSGGINVGTGTCYDLSSRLKLRVIGDVDRHRRSMQNVLGRVIHTGDPKIINRVNQIGSQQFIDRAIGPDKFELKREIFDRLKALDVDVRKVIREEEASAELDEMGRRWMRDQNVNIVNDIIQSLVKKGSRSEKLAHRNEQGMQARFRRTIATNLRDQRQGKEVLNIRGTRGQPEEKKFAAVLLMTGCDIVERAIWSNEETAILRGLYAYAHDKLGCVYRAMKKDFVWSIRPTYTDRCAGVCDRKRTIMVREDYFDLQREENDSVYKWIITEWDKNDVIISAKNGYLYSKYSGEDEDDILVHEIDDRLYTAMIDRILINGWIEKEGLSQIIKEEVRLESFDFTKDAYVDEAGFLVLPEYYDRVIASNIYDCKFKISRVSITSSSNDDPWDKKTADSIIDEQCLWKIPLPNIIDVRPCFRGDLLTSNSQEYSKRFSGIIDELKKDKEIYDDFIPVQEGVRPCVQGHVCRYAFYRQKLTIFTILKRYYPIERILELTDEEDYEYNLYLDKECYKKESLILNLRSIFSLICFLIDFGYEGREITRGEDEYLKIFNEINYGGHARKEAINKYFPQFYQRLMRVRTSENIEDLLPLAFYQALLLSDPCTDNSEKSSHPLILFCQDKVRVVPIRTATQERGLPLLCCIHIFKFHPGLQMRKKELEDDIKKTLPAIFDYWIELEMKRLDTGDRLRTRAQMVELYYSTNCGGSYETLNFVFPIVHPNKGFIACVISSKGGMGALNEDDVRRRFRRIQSSIQGIFSISIDEEMEIQLHHSGNIQARILEKVFFEHKWHIVQVKLNGKIFENHELITKLMN</sequence>
<protein>
    <recommendedName>
        <fullName>Outer capsid protein VP2</fullName>
    </recommendedName>
</protein>
<reference key="1">
    <citation type="journal article" date="1992" name="J. Gen. Virol.">
        <title>Characterization of the genes encoding two of the major capsid proteins of epizootic haemorrhagic disease virus indicates a close genetic relationship to bluetongue virus.</title>
        <authorList>
            <person name="Iwata H."/>
            <person name="Chuma T."/>
            <person name="Roy P."/>
        </authorList>
    </citation>
    <scope>NUCLEOTIDE SEQUENCE [GENOMIC RNA]</scope>
</reference>
<evidence type="ECO:0000305" key="1"/>
<organism>
    <name type="scientific">Epizootic hemorrhagic disease virus 1</name>
    <name type="common">EHDV-1</name>
    <dbReference type="NCBI Taxonomy" id="33720"/>
    <lineage>
        <taxon>Viruses</taxon>
        <taxon>Riboviria</taxon>
        <taxon>Orthornavirae</taxon>
        <taxon>Duplornaviricota</taxon>
        <taxon>Resentoviricetes</taxon>
        <taxon>Reovirales</taxon>
        <taxon>Sedoreoviridae</taxon>
        <taxon>Orbivirus</taxon>
        <taxon>Epizootic hemorrhagic disease virus</taxon>
    </lineage>
</organism>
<proteinExistence type="inferred from homology"/>
<keyword id="KW-0167">Capsid protein</keyword>
<keyword id="KW-1153">Inner capsid protein</keyword>
<keyword id="KW-0946">Virion</keyword>
<gene>
    <name type="primary">Segment-2</name>
    <name type="synonym">L2</name>
</gene>
<comment type="function">
    <text>The VP2 protein is one of the two proteins (with VP5) which constitute the virus particle outer capsid. It is the major target of the host immunogenic response.</text>
</comment>
<comment type="subcellular location">
    <subcellularLocation>
        <location evidence="1">Virion</location>
    </subcellularLocation>
</comment>
<comment type="similarity">
    <text evidence="1">Belongs to the orbivirus VP2 family.</text>
</comment>
<organismHost>
    <name type="scientific">Antilocapra americana</name>
    <name type="common">Pronghorn</name>
    <dbReference type="NCBI Taxonomy" id="9891"/>
</organismHost>
<organismHost>
    <name type="scientific">Odocoileus hemionus</name>
    <name type="common">Mule deer</name>
    <name type="synonym">Cervus hemionus</name>
    <dbReference type="NCBI Taxonomy" id="9872"/>
</organismHost>
<organismHost>
    <name type="scientific">Odocoileus virginianus</name>
    <name type="common">White-tailed deer</name>
    <dbReference type="NCBI Taxonomy" id="9874"/>
</organismHost>
<dbReference type="EMBL" id="D10767">
    <property type="protein sequence ID" value="BAA01597.1"/>
    <property type="molecule type" value="Genomic_RNA"/>
</dbReference>
<dbReference type="PIR" id="JQ1634">
    <property type="entry name" value="JQ1634"/>
</dbReference>
<dbReference type="SMR" id="Q00273"/>
<dbReference type="GO" id="GO:0039625">
    <property type="term" value="C:viral inner capsid"/>
    <property type="evidence" value="ECO:0007669"/>
    <property type="project" value="UniProtKB-KW"/>
</dbReference>
<dbReference type="GO" id="GO:0005198">
    <property type="term" value="F:structural molecule activity"/>
    <property type="evidence" value="ECO:0007669"/>
    <property type="project" value="InterPro"/>
</dbReference>
<dbReference type="InterPro" id="IPR001742">
    <property type="entry name" value="Capsid_VP2_Orbivir"/>
</dbReference>
<dbReference type="Pfam" id="PF00898">
    <property type="entry name" value="Orbi_VP2"/>
    <property type="match status" value="1"/>
</dbReference>
<name>VP2_EHDV1</name>
<feature type="chain" id="PRO_0000222691" description="Outer capsid protein VP2">
    <location>
        <begin position="1"/>
        <end position="971"/>
    </location>
</feature>